<evidence type="ECO:0000255" key="1">
    <source>
        <dbReference type="HAMAP-Rule" id="MF_01324"/>
    </source>
</evidence>
<name>RPOC2_CHAVU</name>
<gene>
    <name evidence="1" type="primary">rpoC2</name>
</gene>
<proteinExistence type="inferred from homology"/>
<sequence length="1412" mass="162967">MRQFKEIPFYNQIVDKGTIKQLIGRLVAHFGSTYTSHILDKLKELGFEYGTKTGISLGIDDLLITPSKKWLIQDAEQQAQASDSHYNSGNLHAVEKLRQLIETWHTTSEYLKQEMNPNFRITDPFNPVHMMAFSGARGTTSQVHQLVGMRGLMSDPHGQIIDLPIQSNFREGLSLAEYIISCYGARKGVVDTAIRTSDSGYLTRRLVDVAQHIVVRKTDCKTHKCISIQPFLEEWKMNIHLYVQQKLIGRILADYVLKDNRCIASRNQDISFDLAIRLLSFKFQSIWVRSPLTCESTRWICQMCYGWSIGYRNLIEVGEAVGIIAAQSIGEPGTQLTLRTFHTGGVFTGDIAQQIRSPLNGIIQLNNSKIRSIRNRYGQPAFVCLDNIHIKVKGKDTYQSIIPTESLLFVKNNQKVQAKQVIAEIRSTIRQSKEEVNKNINSELAGEVFWSNKYYFKEQNLHDLQKNNFFVKNNHNFRNCPTSDSQNENDSNRSNHFLTINSIKYSQEKTNWPISNTGHIWILSGQVYKFHNIQSIFYKQQDKVRIKNILAQKELLVNNGGRYHNFHSQRLSYFQENLMNNSYTHSKKKTKSLSSNFVNNAICGLTILKEKKGKFSFLKNSSFCKKTRTNLQFILEVKNYSRIKHNDLLATLHNPAHRTSTAGMVKYGFLLINSQLDKNLKSYNKNSRKKKISLYQNNQIQPGQSLFWIPEEIHEIYKPFSFLHVKNGEIIQKGTYISEDIQCGTSGLVEINKRNRNHYEISIQPGSLYFLKDKQIALQKDQILIAPGEKIDNTNISDEWLYLKYLKTDQGVSVLFARPAKEYKIDLINHLEHASSLETLYMKKCFDVRISHYTPYEDGQKIRNNAGAQLISASLVFKLNNQNLAHKAEISWTRIKFQRKISYYLQINLRDKILPYSYSLSELKKLKFNSHFSNKNKQINNIDEVILGDTIFHTPLLTKNYGCIRTFSRRRQDNKTSFVLLSSSDQLELPLPIIFFAFISYKRFFNKKLGLIGNLYTKKTKLRNSNQNLFLNLFFISWYIIDEYSCNFLFWGAFSQLIKDARNKYSHNCFPIIIKKAFFSLGKFLSKIEMKILGNLETELGQVISLCNKKIILRIGKPYLATRGAIVHPRNGETIREGDTLMTLIYERLKAGDIIQGLPKIEQLLEARRENVVELIVNRYFLDCTNLLTEELGMLLGSLWGFQFSAWASMERSKLDLVFEIQQVYRSQGVYICDKHIEIIVRQMTSKIIILGDGMTDGFLPGELVEIPRARKTNRAMKSIMFYKPILVGITRASLNTRSFISEASFQETTRVLTKAAIKGRTDWLKGLKENVILGRLIPAGTGSEEIILQRLMNLQKIEKLRKGKSKKYTTSKLDSLLFSKCKSAFLKRHPLNPYCRETFHFILKQQITNSF</sequence>
<dbReference type="EC" id="2.7.7.6" evidence="1"/>
<dbReference type="EMBL" id="DQ229107">
    <property type="protein sequence ID" value="ABA61978.1"/>
    <property type="molecule type" value="Genomic_DNA"/>
</dbReference>
<dbReference type="RefSeq" id="YP_635713.1">
    <property type="nucleotide sequence ID" value="NC_008097.1"/>
</dbReference>
<dbReference type="SMR" id="Q1ACN4"/>
<dbReference type="GeneID" id="4100201"/>
<dbReference type="GO" id="GO:0009507">
    <property type="term" value="C:chloroplast"/>
    <property type="evidence" value="ECO:0007669"/>
    <property type="project" value="UniProtKB-SubCell"/>
</dbReference>
<dbReference type="GO" id="GO:0000428">
    <property type="term" value="C:DNA-directed RNA polymerase complex"/>
    <property type="evidence" value="ECO:0007669"/>
    <property type="project" value="UniProtKB-KW"/>
</dbReference>
<dbReference type="GO" id="GO:0005739">
    <property type="term" value="C:mitochondrion"/>
    <property type="evidence" value="ECO:0007669"/>
    <property type="project" value="GOC"/>
</dbReference>
<dbReference type="GO" id="GO:0003677">
    <property type="term" value="F:DNA binding"/>
    <property type="evidence" value="ECO:0007669"/>
    <property type="project" value="UniProtKB-UniRule"/>
</dbReference>
<dbReference type="GO" id="GO:0003899">
    <property type="term" value="F:DNA-directed RNA polymerase activity"/>
    <property type="evidence" value="ECO:0007669"/>
    <property type="project" value="UniProtKB-UniRule"/>
</dbReference>
<dbReference type="GO" id="GO:0008270">
    <property type="term" value="F:zinc ion binding"/>
    <property type="evidence" value="ECO:0007669"/>
    <property type="project" value="UniProtKB-UniRule"/>
</dbReference>
<dbReference type="GO" id="GO:0006351">
    <property type="term" value="P:DNA-templated transcription"/>
    <property type="evidence" value="ECO:0007669"/>
    <property type="project" value="UniProtKB-UniRule"/>
</dbReference>
<dbReference type="CDD" id="cd02655">
    <property type="entry name" value="RNAP_beta'_C"/>
    <property type="match status" value="1"/>
</dbReference>
<dbReference type="Gene3D" id="1.10.132.30">
    <property type="match status" value="1"/>
</dbReference>
<dbReference type="Gene3D" id="1.10.150.390">
    <property type="match status" value="1"/>
</dbReference>
<dbReference type="Gene3D" id="1.10.1790.20">
    <property type="match status" value="1"/>
</dbReference>
<dbReference type="Gene3D" id="1.10.274.100">
    <property type="entry name" value="RNA polymerase Rpb1, domain 3"/>
    <property type="match status" value="1"/>
</dbReference>
<dbReference type="HAMAP" id="MF_01324">
    <property type="entry name" value="RNApol_bact_RpoC2"/>
    <property type="match status" value="1"/>
</dbReference>
<dbReference type="InterPro" id="IPR012756">
    <property type="entry name" value="DNA-dir_RpoC2_beta_pp"/>
</dbReference>
<dbReference type="InterPro" id="IPR007066">
    <property type="entry name" value="RNA_pol_Rpb1_3"/>
</dbReference>
<dbReference type="InterPro" id="IPR042102">
    <property type="entry name" value="RNA_pol_Rpb1_3_sf"/>
</dbReference>
<dbReference type="InterPro" id="IPR007083">
    <property type="entry name" value="RNA_pol_Rpb1_4"/>
</dbReference>
<dbReference type="InterPro" id="IPR007081">
    <property type="entry name" value="RNA_pol_Rpb1_5"/>
</dbReference>
<dbReference type="InterPro" id="IPR038120">
    <property type="entry name" value="Rpb1_funnel_sf"/>
</dbReference>
<dbReference type="NCBIfam" id="TIGR02388">
    <property type="entry name" value="rpoC2_cyan"/>
    <property type="match status" value="1"/>
</dbReference>
<dbReference type="PANTHER" id="PTHR48443">
    <property type="entry name" value="DNA-DIRECTED RNA POLYMERASE SUBUNIT BETA"/>
    <property type="match status" value="1"/>
</dbReference>
<dbReference type="PANTHER" id="PTHR48443:SF1">
    <property type="entry name" value="DNA-DIRECTED RNA POLYMERASE SUBUNIT BETA"/>
    <property type="match status" value="1"/>
</dbReference>
<dbReference type="Pfam" id="PF04983">
    <property type="entry name" value="RNA_pol_Rpb1_3"/>
    <property type="match status" value="1"/>
</dbReference>
<dbReference type="Pfam" id="PF05000">
    <property type="entry name" value="RNA_pol_Rpb1_4"/>
    <property type="match status" value="1"/>
</dbReference>
<dbReference type="Pfam" id="PF04998">
    <property type="entry name" value="RNA_pol_Rpb1_5"/>
    <property type="match status" value="2"/>
</dbReference>
<dbReference type="SUPFAM" id="SSF64484">
    <property type="entry name" value="beta and beta-prime subunits of DNA dependent RNA-polymerase"/>
    <property type="match status" value="1"/>
</dbReference>
<accession>Q1ACN4</accession>
<organism>
    <name type="scientific">Chara vulgaris</name>
    <name type="common">Common stonewort</name>
    <dbReference type="NCBI Taxonomy" id="55564"/>
    <lineage>
        <taxon>Eukaryota</taxon>
        <taxon>Viridiplantae</taxon>
        <taxon>Streptophyta</taxon>
        <taxon>Charophyceae</taxon>
        <taxon>Charales</taxon>
        <taxon>Characeae</taxon>
        <taxon>Chara</taxon>
    </lineage>
</organism>
<reference key="1">
    <citation type="journal article" date="2006" name="Mol. Biol. Evol.">
        <title>The chloroplast genome sequence of Chara vulgaris sheds new light into the closest green algal relatives of land plants.</title>
        <authorList>
            <person name="Turmel M."/>
            <person name="Otis C."/>
            <person name="Lemieux C."/>
        </authorList>
    </citation>
    <scope>NUCLEOTIDE SEQUENCE [LARGE SCALE GENOMIC DNA]</scope>
</reference>
<keyword id="KW-0150">Chloroplast</keyword>
<keyword id="KW-0240">DNA-directed RNA polymerase</keyword>
<keyword id="KW-0479">Metal-binding</keyword>
<keyword id="KW-0548">Nucleotidyltransferase</keyword>
<keyword id="KW-0934">Plastid</keyword>
<keyword id="KW-0804">Transcription</keyword>
<keyword id="KW-0808">Transferase</keyword>
<keyword id="KW-0862">Zinc</keyword>
<geneLocation type="chloroplast"/>
<protein>
    <recommendedName>
        <fullName evidence="1">DNA-directed RNA polymerase subunit beta''</fullName>
        <ecNumber evidence="1">2.7.7.6</ecNumber>
    </recommendedName>
    <alternativeName>
        <fullName evidence="1">PEP</fullName>
    </alternativeName>
    <alternativeName>
        <fullName evidence="1">Plastid-encoded RNA polymerase subunit beta''</fullName>
        <shortName evidence="1">RNA polymerase subunit beta''</shortName>
    </alternativeName>
</protein>
<comment type="function">
    <text evidence="1">DNA-dependent RNA polymerase catalyzes the transcription of DNA into RNA using the four ribonucleoside triphosphates as substrates.</text>
</comment>
<comment type="catalytic activity">
    <reaction evidence="1">
        <text>RNA(n) + a ribonucleoside 5'-triphosphate = RNA(n+1) + diphosphate</text>
        <dbReference type="Rhea" id="RHEA:21248"/>
        <dbReference type="Rhea" id="RHEA-COMP:14527"/>
        <dbReference type="Rhea" id="RHEA-COMP:17342"/>
        <dbReference type="ChEBI" id="CHEBI:33019"/>
        <dbReference type="ChEBI" id="CHEBI:61557"/>
        <dbReference type="ChEBI" id="CHEBI:140395"/>
        <dbReference type="EC" id="2.7.7.6"/>
    </reaction>
</comment>
<comment type="cofactor">
    <cofactor evidence="1">
        <name>Zn(2+)</name>
        <dbReference type="ChEBI" id="CHEBI:29105"/>
    </cofactor>
    <text evidence="1">Binds 1 Zn(2+) ion per subunit.</text>
</comment>
<comment type="subunit">
    <text evidence="1">In plastids the minimal PEP RNA polymerase catalytic core is composed of four subunits: alpha, beta, beta', and beta''. When a (nuclear-encoded) sigma factor is associated with the core the holoenzyme is formed, which can initiate transcription.</text>
</comment>
<comment type="subcellular location">
    <subcellularLocation>
        <location evidence="1">Plastid</location>
        <location evidence="1">Chloroplast</location>
    </subcellularLocation>
</comment>
<comment type="similarity">
    <text evidence="1">Belongs to the RNA polymerase beta' chain family. RpoC2 subfamily.</text>
</comment>
<feature type="chain" id="PRO_0000277185" description="DNA-directed RNA polymerase subunit beta''">
    <location>
        <begin position="1"/>
        <end position="1412"/>
    </location>
</feature>
<feature type="binding site" evidence="1">
    <location>
        <position position="220"/>
    </location>
    <ligand>
        <name>Zn(2+)</name>
        <dbReference type="ChEBI" id="CHEBI:29105"/>
    </ligand>
</feature>
<feature type="binding site" evidence="1">
    <location>
        <position position="294"/>
    </location>
    <ligand>
        <name>Zn(2+)</name>
        <dbReference type="ChEBI" id="CHEBI:29105"/>
    </ligand>
</feature>
<feature type="binding site" evidence="1">
    <location>
        <position position="301"/>
    </location>
    <ligand>
        <name>Zn(2+)</name>
        <dbReference type="ChEBI" id="CHEBI:29105"/>
    </ligand>
</feature>
<feature type="binding site" evidence="1">
    <location>
        <position position="304"/>
    </location>
    <ligand>
        <name>Zn(2+)</name>
        <dbReference type="ChEBI" id="CHEBI:29105"/>
    </ligand>
</feature>